<keyword id="KW-1185">Reference proteome</keyword>
<keyword id="KW-0677">Repeat</keyword>
<keyword id="KW-0853">WD repeat</keyword>
<sequence>MVDNQGPLAKDVSLANPPSDSISELSWSPVANHLAMSSWDQTVRIYDVSQSGNGEGQALFNFPAPVLSCTFSPDGAKVLGGATDGSARLMDLVAGKEAQQVAAHDAPVRCVRFFGNPGVRDPIAVTGSWDQTVKYWDLRQDRPLATLQCQERVYAMDLCQNLLVVATAGRLVHVVQLSNADQIYKTVTSPLKHQTRTVTCIPDASGFAIGSTEGRTGFHYVDESKSSLNFTFRCHREMAASKNTQNVYAVNDVSFHPKYYTFSTAGADGTFAFWDKDAHHRLKSFPSVGAPITSTGFNHDGTIFAYAVSYDWSKGFRYNTPEHPTRVVCHPVDDVDCRPKNPVKR</sequence>
<gene>
    <name evidence="3" type="primary">poxJ</name>
    <name type="ORF">PDE_04022</name>
</gene>
<feature type="chain" id="PRO_0000453774" description="WD40 repeat protein poxJ">
    <location>
        <begin position="1"/>
        <end position="345"/>
    </location>
</feature>
<feature type="repeat" description="WD 1" evidence="1">
    <location>
        <begin position="15"/>
        <end position="49"/>
    </location>
</feature>
<feature type="repeat" description="WD 2" evidence="1">
    <location>
        <begin position="59"/>
        <end position="100"/>
    </location>
</feature>
<feature type="repeat" description="WD 3" evidence="1">
    <location>
        <begin position="101"/>
        <end position="146"/>
    </location>
</feature>
<feature type="repeat" description="WD 4" evidence="1">
    <location>
        <begin position="250"/>
        <end position="284"/>
    </location>
</feature>
<organism>
    <name type="scientific">Penicillium oxalicum (strain 114-2 / CGMCC 5302)</name>
    <name type="common">Penicillium decumbens</name>
    <dbReference type="NCBI Taxonomy" id="933388"/>
    <lineage>
        <taxon>Eukaryota</taxon>
        <taxon>Fungi</taxon>
        <taxon>Dikarya</taxon>
        <taxon>Ascomycota</taxon>
        <taxon>Pezizomycotina</taxon>
        <taxon>Eurotiomycetes</taxon>
        <taxon>Eurotiomycetidae</taxon>
        <taxon>Eurotiales</taxon>
        <taxon>Aspergillaceae</taxon>
        <taxon>Penicillium</taxon>
    </lineage>
</organism>
<dbReference type="EMBL" id="KB644411">
    <property type="protein sequence ID" value="EPS29073.1"/>
    <property type="molecule type" value="Genomic_DNA"/>
</dbReference>
<dbReference type="SMR" id="S8ASK6"/>
<dbReference type="STRING" id="933388.S8ASK6"/>
<dbReference type="eggNOG" id="KOG0647">
    <property type="taxonomic scope" value="Eukaryota"/>
</dbReference>
<dbReference type="HOGENOM" id="CLU_038526_1_0_1"/>
<dbReference type="OrthoDB" id="256303at2759"/>
<dbReference type="PhylomeDB" id="S8ASK6"/>
<dbReference type="Proteomes" id="UP000019376">
    <property type="component" value="Unassembled WGS sequence"/>
</dbReference>
<dbReference type="FunFam" id="2.130.10.10:FF:000190">
    <property type="entry name" value="Nuclear pore complex subunit"/>
    <property type="match status" value="1"/>
</dbReference>
<dbReference type="Gene3D" id="2.130.10.10">
    <property type="entry name" value="YVTN repeat-like/Quinoprotein amine dehydrogenase"/>
    <property type="match status" value="1"/>
</dbReference>
<dbReference type="InterPro" id="IPR015943">
    <property type="entry name" value="WD40/YVTN_repeat-like_dom_sf"/>
</dbReference>
<dbReference type="InterPro" id="IPR036322">
    <property type="entry name" value="WD40_repeat_dom_sf"/>
</dbReference>
<dbReference type="InterPro" id="IPR001680">
    <property type="entry name" value="WD40_rpt"/>
</dbReference>
<dbReference type="PANTHER" id="PTHR10971">
    <property type="entry name" value="MRNA EXPORT FACTOR AND BUB3"/>
    <property type="match status" value="1"/>
</dbReference>
<dbReference type="Pfam" id="PF00400">
    <property type="entry name" value="WD40"/>
    <property type="match status" value="4"/>
</dbReference>
<dbReference type="SMART" id="SM00320">
    <property type="entry name" value="WD40"/>
    <property type="match status" value="5"/>
</dbReference>
<dbReference type="SUPFAM" id="SSF50978">
    <property type="entry name" value="WD40 repeat-like"/>
    <property type="match status" value="1"/>
</dbReference>
<dbReference type="PROSITE" id="PS50082">
    <property type="entry name" value="WD_REPEATS_2"/>
    <property type="match status" value="2"/>
</dbReference>
<dbReference type="PROSITE" id="PS50294">
    <property type="entry name" value="WD_REPEATS_REGION"/>
    <property type="match status" value="2"/>
</dbReference>
<evidence type="ECO:0000255" key="1">
    <source>
        <dbReference type="PROSITE-ProRule" id="PRU00221"/>
    </source>
</evidence>
<evidence type="ECO:0000269" key="2">
    <source>
    </source>
</evidence>
<evidence type="ECO:0000303" key="3">
    <source>
    </source>
</evidence>
<evidence type="ECO:0000305" key="4"/>
<evidence type="ECO:0000305" key="5">
    <source>
    </source>
</evidence>
<evidence type="ECO:0000305" key="6">
    <source>
    </source>
</evidence>
<accession>S8ASK6</accession>
<protein>
    <recommendedName>
        <fullName evidence="3">WD40 repeat protein poxJ</fullName>
    </recommendedName>
    <alternativeName>
        <fullName evidence="3">Oxaleimides biosynthesis cluster protein J</fullName>
    </alternativeName>
</protein>
<reference key="1">
    <citation type="journal article" date="2013" name="PLoS ONE">
        <title>Genomic and secretomic analyses reveal unique features of the lignocellulolytic enzyme system of Penicillium decumbens.</title>
        <authorList>
            <person name="Liu G."/>
            <person name="Zhang L."/>
            <person name="Wei X."/>
            <person name="Zou G."/>
            <person name="Qin Y."/>
            <person name="Ma L."/>
            <person name="Li J."/>
            <person name="Zheng H."/>
            <person name="Wang S."/>
            <person name="Wang C."/>
            <person name="Xun L."/>
            <person name="Zhao G.-P."/>
            <person name="Zhou Z."/>
            <person name="Qu Y."/>
        </authorList>
    </citation>
    <scope>NUCLEOTIDE SEQUENCE [LARGE SCALE GENOMIC DNA]</scope>
    <source>
        <strain>114-2 / CGMCC 5302</strain>
    </source>
</reference>
<reference key="2">
    <citation type="journal article" date="2017" name="J. Am. Chem. Soc.">
        <title>Collaborative Biosynthesis of Maleimide- and Succinimide-Containing Natural Products by Fungal Polyketide Megasynthases.</title>
        <authorList>
            <person name="Sato M."/>
            <person name="Dander J.E."/>
            <person name="Sato C."/>
            <person name="Hung Y.S."/>
            <person name="Gao S.S."/>
            <person name="Tang M.C."/>
            <person name="Hang L."/>
            <person name="Winter J.M."/>
            <person name="Garg N.K."/>
            <person name="Watanabe K."/>
            <person name="Tang Y."/>
        </authorList>
    </citation>
    <scope>FUNCTION</scope>
    <scope>INDUCTION</scope>
    <scope>PATHWAY</scope>
</reference>
<reference key="3">
    <citation type="journal article" date="2020" name="Chem. Commun. (Camb.)">
        <title>Evidence for enzyme catalysed intramolecular [4+2] Diels-Alder cyclization during the biosynthesis of pyrichalasin H.</title>
        <authorList>
            <person name="Hantke V."/>
            <person name="Skellam E.J."/>
            <person name="Cox R.J."/>
        </authorList>
    </citation>
    <scope>FUNCTION</scope>
</reference>
<proteinExistence type="evidence at transcript level"/>
<comment type="function">
    <text evidence="2 6">WD40 repeat protein; part of the gene cluster that mediates the biosynthesis of oxaleimides, cytotoxic compounds containing an unusual disubstituted succinimide moiety (PubMed:28365998). The first step of the pathway is provided by the HR-PKS poxF that serves in a new mode of collaborative biosynthesis with the PKS-NRPS poxE, by providing the olefin containing amino acid substrate via the synthesis of an ACP-bound dec-4-enoate (PubMed:28365998). The cytochrome P450 monooxygenase poxM-catalyzed oxidation at the alpha-position creates the enzyme-bound 2-hydroxydec-4-enoyl-ACP thioester, which may be prone to spontaneous hydrolysis to yield 2-hydroxydec-4-enoic acid due to increased electrophilicity of the carbonyl (PubMed:28365998). 2-hydroxydec-4-enoic acid can then be further oxidized by poxM to yield the alpha-ketoacid 2-oxodec-4-enoicacid, which is reductively aminated by the aminotransferase poxL to yield (S,E)-2-aminodec-4-enoic acid (PubMed:28365998). The Hybrid PKS-NRPS synthetase poxE then performs condensation between the octaketide product of its PKS modules and the amino group of (S,E)-2-aminodec-4-enoic acid which is activated and incorporated by the adenylation domain (PubMed:28365998). The resulting aminoacyl product can be cyclized by the Diels-Alderase PoxQ and reductively released by the reductive (R) domain of poxE to yield an aldehyde intermediate (Probable) (PubMed:28365998). The released aldehyde is then substrate for a Knoevenagel condensation by the hydrolyase poxO followed by an oxidation at the 5-position of the pyrrolidone ring (PubMed:28365998). The presence of the olefin from the amino acid building block allows for migration of the substituted allyl group to occur (PubMed:28365998). This allylic transposition reaction takes place in a conjugate addition, semipinacol-like fashion to yield a succinimide intermediate (PubMed:28365998). Iterative two-electron oxidations of the C7 methyl of the succinimide intermediate to the carboxylic acid can be catalyzed by one of two remaining cytochrome P450 monooxygenasess poxC or poxD to yield oxaleimide A (PubMed:28365998). Subsequent oxidation yields the maleimide scaffold oxaleimide I (PubMed:28365998). Both oxaleimide A and oxaleimide I can undergo oxidative modifications in the decalin ring to yield the series of products oxaleimides B to H (PubMed:28365998).</text>
</comment>
<comment type="pathway">
    <text evidence="5">Secondary metabolite biosynthesis.</text>
</comment>
<comment type="induction">
    <text evidence="2">Expression is positively regulated by the oxaleimides biosynthesis cluster-specific transcription factor poxB.</text>
</comment>
<comment type="similarity">
    <text evidence="4">Belongs to the WD repeat rae1 family.</text>
</comment>
<name>POXJ_PENO1</name>